<proteinExistence type="inferred from homology"/>
<gene>
    <name evidence="1" type="primary">nrdR</name>
    <name type="ordered locus">SF0350</name>
    <name type="ordered locus">S0358</name>
</gene>
<comment type="function">
    <text evidence="1">Negatively regulates transcription of bacterial ribonucleotide reductase nrd genes and operons by binding to NrdR-boxes.</text>
</comment>
<comment type="cofactor">
    <cofactor evidence="1">
        <name>Zn(2+)</name>
        <dbReference type="ChEBI" id="CHEBI:29105"/>
    </cofactor>
    <text evidence="1">Binds 1 zinc ion.</text>
</comment>
<comment type="similarity">
    <text evidence="1">Belongs to the NrdR family.</text>
</comment>
<reference key="1">
    <citation type="submission" date="1997-05" db="EMBL/GenBank/DDBJ databases">
        <title>Cytochrome bd controls in vivo virulence and cell-to-cell spread in Shigella flexneri.</title>
        <authorList>
            <person name="Way S.S."/>
            <person name="Sallustio S."/>
            <person name="Magliozzo R."/>
            <person name="Goldberg M.B."/>
        </authorList>
    </citation>
    <scope>NUCLEOTIDE SEQUENCE [GENOMIC DNA]</scope>
    <source>
        <strain>ATCC 700930 / 2457T / Serotype 2a</strain>
    </source>
</reference>
<reference key="2">
    <citation type="journal article" date="2002" name="Nucleic Acids Res.">
        <title>Genome sequence of Shigella flexneri 2a: insights into pathogenicity through comparison with genomes of Escherichia coli K12 and O157.</title>
        <authorList>
            <person name="Jin Q."/>
            <person name="Yuan Z."/>
            <person name="Xu J."/>
            <person name="Wang Y."/>
            <person name="Shen Y."/>
            <person name="Lu W."/>
            <person name="Wang J."/>
            <person name="Liu H."/>
            <person name="Yang J."/>
            <person name="Yang F."/>
            <person name="Zhang X."/>
            <person name="Zhang J."/>
            <person name="Yang G."/>
            <person name="Wu H."/>
            <person name="Qu D."/>
            <person name="Dong J."/>
            <person name="Sun L."/>
            <person name="Xue Y."/>
            <person name="Zhao A."/>
            <person name="Gao Y."/>
            <person name="Zhu J."/>
            <person name="Kan B."/>
            <person name="Ding K."/>
            <person name="Chen S."/>
            <person name="Cheng H."/>
            <person name="Yao Z."/>
            <person name="He B."/>
            <person name="Chen R."/>
            <person name="Ma D."/>
            <person name="Qiang B."/>
            <person name="Wen Y."/>
            <person name="Hou Y."/>
            <person name="Yu J."/>
        </authorList>
    </citation>
    <scope>NUCLEOTIDE SEQUENCE [LARGE SCALE GENOMIC DNA]</scope>
    <source>
        <strain>301 / Serotype 2a</strain>
    </source>
</reference>
<reference key="3">
    <citation type="journal article" date="2003" name="Infect. Immun.">
        <title>Complete genome sequence and comparative genomics of Shigella flexneri serotype 2a strain 2457T.</title>
        <authorList>
            <person name="Wei J."/>
            <person name="Goldberg M.B."/>
            <person name="Burland V."/>
            <person name="Venkatesan M.M."/>
            <person name="Deng W."/>
            <person name="Fournier G."/>
            <person name="Mayhew G.F."/>
            <person name="Plunkett G. III"/>
            <person name="Rose D.J."/>
            <person name="Darling A."/>
            <person name="Mau B."/>
            <person name="Perna N.T."/>
            <person name="Payne S.M."/>
            <person name="Runyen-Janecky L.J."/>
            <person name="Zhou S."/>
            <person name="Schwartz D.C."/>
            <person name="Blattner F.R."/>
        </authorList>
    </citation>
    <scope>NUCLEOTIDE SEQUENCE [LARGE SCALE GENOMIC DNA]</scope>
    <source>
        <strain>ATCC 700930 / 2457T / Serotype 2a</strain>
    </source>
</reference>
<dbReference type="EMBL" id="AF002857">
    <property type="protein sequence ID" value="AAB95438.1"/>
    <property type="molecule type" value="Genomic_DNA"/>
</dbReference>
<dbReference type="EMBL" id="AE005674">
    <property type="protein sequence ID" value="AAN42008.1"/>
    <property type="molecule type" value="Genomic_DNA"/>
</dbReference>
<dbReference type="EMBL" id="AE014073">
    <property type="protein sequence ID" value="AAP15885.1"/>
    <property type="molecule type" value="Genomic_DNA"/>
</dbReference>
<dbReference type="RefSeq" id="NP_706301.1">
    <property type="nucleotide sequence ID" value="NC_004337.2"/>
</dbReference>
<dbReference type="RefSeq" id="WP_000543539.1">
    <property type="nucleotide sequence ID" value="NZ_WPGW01000023.1"/>
</dbReference>
<dbReference type="SMR" id="O51824"/>
<dbReference type="STRING" id="198214.SF0350"/>
<dbReference type="PaxDb" id="198214-SF0350"/>
<dbReference type="GeneID" id="1027679"/>
<dbReference type="KEGG" id="sfl:SF0350"/>
<dbReference type="KEGG" id="sfx:S0358"/>
<dbReference type="PATRIC" id="fig|198214.7.peg.401"/>
<dbReference type="HOGENOM" id="CLU_108412_0_0_6"/>
<dbReference type="Proteomes" id="UP000001006">
    <property type="component" value="Chromosome"/>
</dbReference>
<dbReference type="Proteomes" id="UP000002673">
    <property type="component" value="Chromosome"/>
</dbReference>
<dbReference type="GO" id="GO:0005524">
    <property type="term" value="F:ATP binding"/>
    <property type="evidence" value="ECO:0007669"/>
    <property type="project" value="UniProtKB-KW"/>
</dbReference>
<dbReference type="GO" id="GO:0003677">
    <property type="term" value="F:DNA binding"/>
    <property type="evidence" value="ECO:0007669"/>
    <property type="project" value="UniProtKB-KW"/>
</dbReference>
<dbReference type="GO" id="GO:0008270">
    <property type="term" value="F:zinc ion binding"/>
    <property type="evidence" value="ECO:0007669"/>
    <property type="project" value="UniProtKB-UniRule"/>
</dbReference>
<dbReference type="GO" id="GO:0045892">
    <property type="term" value="P:negative regulation of DNA-templated transcription"/>
    <property type="evidence" value="ECO:0007669"/>
    <property type="project" value="UniProtKB-UniRule"/>
</dbReference>
<dbReference type="HAMAP" id="MF_00440">
    <property type="entry name" value="NrdR"/>
    <property type="match status" value="1"/>
</dbReference>
<dbReference type="InterPro" id="IPR005144">
    <property type="entry name" value="ATP-cone_dom"/>
</dbReference>
<dbReference type="InterPro" id="IPR055173">
    <property type="entry name" value="NrdR-like_N"/>
</dbReference>
<dbReference type="InterPro" id="IPR003796">
    <property type="entry name" value="RNR_NrdR-like"/>
</dbReference>
<dbReference type="NCBIfam" id="TIGR00244">
    <property type="entry name" value="transcriptional regulator NrdR"/>
    <property type="match status" value="1"/>
</dbReference>
<dbReference type="PANTHER" id="PTHR30455">
    <property type="entry name" value="TRANSCRIPTIONAL REPRESSOR NRDR"/>
    <property type="match status" value="1"/>
</dbReference>
<dbReference type="PANTHER" id="PTHR30455:SF2">
    <property type="entry name" value="TRANSCRIPTIONAL REPRESSOR NRDR"/>
    <property type="match status" value="1"/>
</dbReference>
<dbReference type="Pfam" id="PF03477">
    <property type="entry name" value="ATP-cone"/>
    <property type="match status" value="1"/>
</dbReference>
<dbReference type="Pfam" id="PF22811">
    <property type="entry name" value="Zn_ribbon_NrdR"/>
    <property type="match status" value="1"/>
</dbReference>
<dbReference type="PROSITE" id="PS51161">
    <property type="entry name" value="ATP_CONE"/>
    <property type="match status" value="1"/>
</dbReference>
<keyword id="KW-0067">ATP-binding</keyword>
<keyword id="KW-0238">DNA-binding</keyword>
<keyword id="KW-0479">Metal-binding</keyword>
<keyword id="KW-0547">Nucleotide-binding</keyword>
<keyword id="KW-1185">Reference proteome</keyword>
<keyword id="KW-0678">Repressor</keyword>
<keyword id="KW-0804">Transcription</keyword>
<keyword id="KW-0805">Transcription regulation</keyword>
<keyword id="KW-0862">Zinc</keyword>
<keyword id="KW-0863">Zinc-finger</keyword>
<organism>
    <name type="scientific">Shigella flexneri</name>
    <dbReference type="NCBI Taxonomy" id="623"/>
    <lineage>
        <taxon>Bacteria</taxon>
        <taxon>Pseudomonadati</taxon>
        <taxon>Pseudomonadota</taxon>
        <taxon>Gammaproteobacteria</taxon>
        <taxon>Enterobacterales</taxon>
        <taxon>Enterobacteriaceae</taxon>
        <taxon>Shigella</taxon>
    </lineage>
</organism>
<sequence length="149" mass="17277">MHCPFCFAVDTKVIDSRLVGEGSSVRRRRQCLVCNERFTTFEVAELVMPRVVKSNDVREPFNEEKLRSGMLRALEKRPVSSDYVEMAINHIKSQLRATGEREVPSKMIGNLVMEQLKKLDKVAYIRFASVYRSFEDIKEFGEEIARLED</sequence>
<accession>O51824</accession>
<evidence type="ECO:0000255" key="1">
    <source>
        <dbReference type="HAMAP-Rule" id="MF_00440"/>
    </source>
</evidence>
<evidence type="ECO:0000305" key="2"/>
<protein>
    <recommendedName>
        <fullName evidence="1">Transcriptional repressor NrdR</fullName>
    </recommendedName>
</protein>
<name>NRDR_SHIFL</name>
<feature type="chain" id="PRO_0000182345" description="Transcriptional repressor NrdR">
    <location>
        <begin position="1"/>
        <end position="149"/>
    </location>
</feature>
<feature type="domain" description="ATP-cone" evidence="1">
    <location>
        <begin position="49"/>
        <end position="139"/>
    </location>
</feature>
<feature type="zinc finger region" evidence="1">
    <location>
        <begin position="3"/>
        <end position="34"/>
    </location>
</feature>
<feature type="sequence conflict" description="In Ref. 1; AAB95438." evidence="2" ref="1">
    <original>I</original>
    <variation>N</variation>
    <location>
        <position position="88"/>
    </location>
</feature>